<name>VSR_BSMV</name>
<evidence type="ECO:0000255" key="1"/>
<evidence type="ECO:0000269" key="2">
    <source>
    </source>
</evidence>
<evidence type="ECO:0000269" key="3">
    <source>
    </source>
</evidence>
<evidence type="ECO:0000269" key="4">
    <source>
    </source>
</evidence>
<evidence type="ECO:0000269" key="5">
    <source>
    </source>
</evidence>
<evidence type="ECO:0000269" key="6">
    <source>
    </source>
</evidence>
<evidence type="ECO:0000269" key="7">
    <source>
    </source>
</evidence>
<evidence type="ECO:0000269" key="8">
    <source>
    </source>
</evidence>
<evidence type="ECO:0000303" key="9">
    <source>
    </source>
</evidence>
<evidence type="ECO:0000305" key="10"/>
<sequence length="153" mass="17160">MMATFSCVCCGTSTTSTYCGKRCERKHVYSETRNKRLELYKKYLLEPQKCALNGIVGHSCGMPCSIAEEACDQLPIVSRFCGQKHADLYDSLLKRSEQELLLEFLQKKMQELKLSHIVKMAKLESEVNAIRKSVASSFEDSVGCDDSSSVSKL</sequence>
<keyword id="KW-0175">Coiled coil</keyword>
<keyword id="KW-1031">Host cell junction</keyword>
<keyword id="KW-1038">Host endoplasmic reticulum</keyword>
<keyword id="KW-0945">Host-virus interaction</keyword>
<keyword id="KW-1083">Inhibition of host autophagy by virus</keyword>
<keyword id="KW-1090">Inhibition of host innate immune response by virus</keyword>
<keyword id="KW-0479">Metal-binding</keyword>
<keyword id="KW-0597">Phosphoprotein</keyword>
<keyword id="KW-1185">Reference proteome</keyword>
<keyword id="KW-0941">Suppressor of RNA silencing</keyword>
<keyword id="KW-0899">Viral immunoevasion</keyword>
<keyword id="KW-0843">Virulence</keyword>
<keyword id="KW-0862">Zinc</keyword>
<organism>
    <name type="scientific">Barley stripe mosaic virus</name>
    <name type="common">BSMV</name>
    <dbReference type="NCBI Taxonomy" id="12327"/>
    <lineage>
        <taxon>Viruses</taxon>
        <taxon>Riboviria</taxon>
        <taxon>Orthornavirae</taxon>
        <taxon>Kitrinoviricota</taxon>
        <taxon>Alsuviricetes</taxon>
        <taxon>Martellivirales</taxon>
        <taxon>Virgaviridae</taxon>
        <taxon>Hordeivirus</taxon>
    </lineage>
</organism>
<dbReference type="EMBL" id="M16576">
    <property type="protein sequence ID" value="AAA66601.1"/>
    <property type="molecule type" value="Genomic_RNA"/>
</dbReference>
<dbReference type="EMBL" id="X52774">
    <property type="protein sequence ID" value="CAA36984.1"/>
    <property type="molecule type" value="Genomic_RNA"/>
</dbReference>
<dbReference type="PIR" id="PN0103">
    <property type="entry name" value="PN0103"/>
</dbReference>
<dbReference type="RefSeq" id="NP_604482.1">
    <property type="nucleotide sequence ID" value="NC_003478.1"/>
</dbReference>
<dbReference type="iPTMnet" id="Q80874"/>
<dbReference type="GeneID" id="962674"/>
<dbReference type="KEGG" id="vg:962674"/>
<dbReference type="Proteomes" id="UP000001667">
    <property type="component" value="Genome"/>
</dbReference>
<dbReference type="GO" id="GO:0044165">
    <property type="term" value="C:host cell endoplasmic reticulum"/>
    <property type="evidence" value="ECO:0007669"/>
    <property type="project" value="UniProtKB-SubCell"/>
</dbReference>
<dbReference type="GO" id="GO:0044219">
    <property type="term" value="C:host cell plasmodesma"/>
    <property type="evidence" value="ECO:0007669"/>
    <property type="project" value="UniProtKB-SubCell"/>
</dbReference>
<dbReference type="GO" id="GO:0046872">
    <property type="term" value="F:metal ion binding"/>
    <property type="evidence" value="ECO:0007669"/>
    <property type="project" value="UniProtKB-KW"/>
</dbReference>
<dbReference type="GO" id="GO:0140321">
    <property type="term" value="P:symbiont-mediated suppression of host autophagy"/>
    <property type="evidence" value="ECO:0000314"/>
    <property type="project" value="UniProtKB"/>
</dbReference>
<dbReference type="GO" id="GO:0140533">
    <property type="term" value="P:symbiont-mediated suppression of host RNAi-mediated antiviral immune response"/>
    <property type="evidence" value="ECO:0000314"/>
    <property type="project" value="UniProtKB"/>
</dbReference>
<organismHost>
    <name type="scientific">Hordeum vulgare</name>
    <name type="common">Barley</name>
    <dbReference type="NCBI Taxonomy" id="4513"/>
</organismHost>
<organismHost>
    <name type="scientific">Triticum aestivum</name>
    <name type="common">Wheat</name>
    <dbReference type="NCBI Taxonomy" id="4565"/>
</organismHost>
<feature type="chain" id="PRO_0000222494" description="Suppressor of RNA silencing">
    <location>
        <begin position="1"/>
        <end position="153"/>
    </location>
</feature>
<feature type="region of interest" description="Interaction with TGB1" evidence="7">
    <location>
        <begin position="1"/>
        <end position="85"/>
    </location>
</feature>
<feature type="region of interest" description="C-1">
    <location>
        <begin position="1"/>
        <end position="23"/>
    </location>
</feature>
<feature type="region of interest" description="Basic motif (BM)">
    <location>
        <begin position="19"/>
        <end position="47"/>
    </location>
</feature>
<feature type="region of interest" description="C-2">
    <location>
        <begin position="60"/>
        <end position="85"/>
    </location>
</feature>
<feature type="region of interest" description="Interaction with replication protein alpha-A" evidence="4">
    <location>
        <begin position="86"/>
        <end position="127"/>
    </location>
</feature>
<feature type="coiled-coil region" evidence="1">
    <location>
        <begin position="92"/>
        <end position="132"/>
    </location>
</feature>
<feature type="modified residue" description="Phosphoserine" evidence="5">
    <location>
        <position position="96"/>
    </location>
</feature>
<feature type="mutagenesis site" description="Complete loss of C1 zinc-binding activity; when associated with S-9; S-10; S-19 and S-23." evidence="3">
    <original>C</original>
    <variation>S</variation>
    <location>
        <position position="7"/>
    </location>
</feature>
<feature type="mutagenesis site" description="Complete loss of C1 zinc-binding activity; when associated with S-7; S-10; S-19 and S-23." evidence="3">
    <original>C</original>
    <variation>S</variation>
    <location>
        <position position="9"/>
    </location>
</feature>
<feature type="mutagenesis site" description="Complete loss of C1 zinc-binding activity; when associated with S-7; S-9; S-19 and S-23." evidence="3">
    <original>C</original>
    <variation>S</variation>
    <location>
        <position position="10"/>
    </location>
</feature>
<feature type="mutagenesis site" description="Complete loss of C1 zinc-binding activity; when associated with S-7; S-9; S-10 and S-23." evidence="3">
    <original>C</original>
    <variation>S</variation>
    <location>
        <position position="19"/>
    </location>
</feature>
<feature type="mutagenesis site" description="Complete loss of C1 zinc-binding activity; when associated with S-7; S-9; S-10 and S-19." evidence="3">
    <original>C</original>
    <variation>S</variation>
    <location>
        <position position="23"/>
    </location>
</feature>
<feature type="mutagenesis site" description="Complete loss of BM zinc-binding activity; when associated with K-26; E-33; K-35 and E-36." evidence="3">
    <original>R</original>
    <variation>N</variation>
    <location>
        <position position="25"/>
    </location>
</feature>
<feature type="mutagenesis site" description="Complete loss of BM zinc-binding activity; when associated with E-25; E-33; K-35 and E-36." evidence="3">
    <original>K</original>
    <variation>Q</variation>
    <location>
        <position position="26"/>
    </location>
</feature>
<feature type="mutagenesis site" description="Complete loss of BM zinc-binding activity; when associated with E-25; K-26; K-35 and E-36." evidence="3">
    <original>R</original>
    <variation>Q</variation>
    <location>
        <position position="33"/>
    </location>
</feature>
<feature type="mutagenesis site" description="Complete loss of BM zinc-binding activity; when associated with E-25; K-26; E-33 and E-36." evidence="3">
    <original>K</original>
    <variation>N</variation>
    <location>
        <position position="35"/>
    </location>
</feature>
<feature type="mutagenesis site" description="Complete loss of BM zinc-binding activity; when associated with E-25; K-26; E-33 and K-35." evidence="3">
    <original>R</original>
    <variation>Q</variation>
    <location>
        <position position="36"/>
    </location>
</feature>
<feature type="mutagenesis site" description="Complete loss of C2 zinc-binding activity; when associated with S-64; S-71; S-81 and S-85." evidence="3">
    <original>C</original>
    <variation>S</variation>
    <location>
        <position position="60"/>
    </location>
</feature>
<feature type="mutagenesis site" description="Complete loss of C2 zinc-binding activity; when associated with S-60; S-71; S-81 and S-85." evidence="3">
    <original>C</original>
    <variation>S</variation>
    <location>
        <position position="64"/>
    </location>
</feature>
<feature type="mutagenesis site" description="Complete loss of C2 zinc-binding activity; when associated with S-60; S-64; S-81 and S-85." evidence="3">
    <original>C</original>
    <variation>S</variation>
    <location>
        <position position="71"/>
    </location>
</feature>
<feature type="mutagenesis site" description="Complete loss of C2 zinc-binding activity; when associated with S-60; S-64; S-71 and S-85." evidence="3">
    <original>C</original>
    <variation>S</variation>
    <location>
        <position position="81"/>
    </location>
</feature>
<feature type="mutagenesis site" description="Complete loss of C2 zinc-binding activity; when associated with S-60; S-64; S-71 and S-81." evidence="3">
    <original>H</original>
    <variation>S</variation>
    <location>
        <position position="85"/>
    </location>
</feature>
<feature type="mutagenesis site" description="Reduced viral accumulation." evidence="5">
    <original>S</original>
    <variation>A</variation>
    <variation>R</variation>
    <location>
        <position position="96"/>
    </location>
</feature>
<feature type="mutagenesis site" description="No effect on viral accumulation." evidence="5">
    <original>S</original>
    <variation>D</variation>
    <location>
        <position position="96"/>
    </location>
</feature>
<feature type="sequence conflict" description="In Ref. 2; CAA36984." evidence="10" ref="2">
    <original>G</original>
    <variation>E</variation>
    <location>
        <position position="54"/>
    </location>
</feature>
<feature type="sequence conflict" description="In Ref. 2; CAA36984." evidence="10" ref="2">
    <original>P</original>
    <variation>L</variation>
    <location>
        <position position="63"/>
    </location>
</feature>
<proteinExistence type="evidence at protein level"/>
<reference key="1">
    <citation type="journal article" date="1987" name="Virology">
        <title>Nucleotide sequence and genetic organization of barley stripe mosaic virus RNA gamma.</title>
        <authorList>
            <person name="Gustafson G."/>
            <person name="Hunter B."/>
            <person name="Hanau R."/>
            <person name="Armour S.L."/>
            <person name="Jackson A.O."/>
        </authorList>
    </citation>
    <scope>NUCLEOTIDE SEQUENCE [GENOMIC RNA]</scope>
</reference>
<reference key="2">
    <citation type="journal article" date="1989" name="Mol. Biol. (Mosk.)">
        <title>Primary structure of RNA 3 of barley stripe mosaic virus and its variability.</title>
        <authorList>
            <person name="Kozlov Y.V."/>
            <person name="Afanasiev B.N."/>
            <person name="Rupasov V.V."/>
            <person name="Golova I.B."/>
            <person name="Kulaeva O.I."/>
            <person name="Dolia V.V."/>
            <person name="Atabekov I.G."/>
            <person name="Baev A.A."/>
        </authorList>
    </citation>
    <scope>NUCLEOTIDE SEQUENCE [GENOMIC RNA]</scope>
</reference>
<reference key="3">
    <citation type="journal article" date="2002" name="J. Virol.">
        <title>Long-distance movement, virulence, and RNA silencing suppression controlled by a single protein in hordei- and potyviruses: complementary functions between virus families.</title>
        <authorList>
            <person name="Yelina N.E."/>
            <person name="Savenkov E.I."/>
            <person name="Solovyev A.G."/>
            <person name="Morozov S.Y."/>
            <person name="Valkonen J.P.T."/>
        </authorList>
    </citation>
    <scope>FUNCTION</scope>
    <source>
        <strain>ND18</strain>
    </source>
</reference>
<reference key="4">
    <citation type="journal article" date="2004" name="J. Virol.">
        <title>The N-terminal 85 amino acids of the barley stripe mosaic virus gammab pathogenesis protein contain three zinc-binding motifs.</title>
        <authorList>
            <person name="Bragg J.N."/>
            <person name="Lawrence D.M."/>
            <person name="Jackson A.O."/>
        </authorList>
    </citation>
    <scope>ZINC-BINDING DOMAINS</scope>
    <scope>MUTAGENESIS OF CYS-7; CYS-9; CYS-10; CYS-19; CYS-23; ARG-25; LYS-26; ARG-33; LYS-35; ARG-36; CYS-60; CYS-64; CYS-71; CYS-81 AND HIS-85</scope>
</reference>
<reference key="5">
    <citation type="journal article" date="2017" name="PLoS Pathog.">
        <title>The Barley stripe mosaic virus gammab protein promotes chloroplast-targeted replication by enhancing unwinding of RNA duplexes.</title>
        <authorList>
            <person name="Zhang K."/>
            <person name="Zhang Y."/>
            <person name="Yang M."/>
            <person name="Liu S."/>
            <person name="Li Z."/>
            <person name="Wang X."/>
            <person name="Han C."/>
            <person name="Yu J."/>
            <person name="Li D."/>
        </authorList>
    </citation>
    <scope>FUNCTION</scope>
    <scope>SUBCELLULAR LOCATION</scope>
    <scope>INTERACTION WITH APLHA-A PROTEIN</scope>
</reference>
<reference key="6">
    <citation type="journal article" date="2018" name="New Phytol.">
        <title>Barley stripe mosaic virus infection requires PKA-mediated phosphorylation of gammab for suppression of both RNA silencing and the host cell death response.</title>
        <authorList>
            <person name="Zhang X."/>
            <person name="Dong K."/>
            <person name="Xu K."/>
            <person name="Zhang K."/>
            <person name="Jin X."/>
            <person name="Yang M."/>
            <person name="Zhang Y."/>
            <person name="Wang X."/>
            <person name="Han C."/>
            <person name="Yu J."/>
            <person name="Li D."/>
        </authorList>
    </citation>
    <scope>PHOSPHORYLATION AT SER-96</scope>
    <scope>MUTAGENESIS OF SER-96</scope>
    <scope>SUBUNIT</scope>
</reference>
<reference key="7">
    <citation type="journal article" date="2018" name="Plant Cell">
        <title>Barley stripe mosaic virus gammab Protein Subverts Autophagy to Promote Viral Infection by Disrupting the ATG7-ATG8 Interaction.</title>
        <authorList>
            <person name="Yang M."/>
            <person name="Zhang Y."/>
            <person name="Xie X."/>
            <person name="Yue N."/>
            <person name="Li J."/>
            <person name="Wang X.B."/>
            <person name="Han C."/>
            <person name="Yu J."/>
            <person name="Liu Y."/>
            <person name="Li D."/>
        </authorList>
    </citation>
    <scope>INTERACTION WITH HOST ATG7</scope>
    <scope>FUNCTION</scope>
</reference>
<reference key="8">
    <citation type="journal article" date="2020" name="PLoS Pathog.">
        <title>The Barley stripe mosaic virus gammab protein promotes viral cell-to-cell movement by enhancing ATPase-mediated assembly of ribonucleoprotein movement complexes.</title>
        <authorList>
            <person name="Jiang Z."/>
            <person name="Zhang K."/>
            <person name="Li Z."/>
            <person name="Li Z."/>
            <person name="Yang M."/>
            <person name="Jin X."/>
            <person name="Cao Q."/>
            <person name="Wang X."/>
            <person name="Yue N."/>
            <person name="Li D."/>
            <person name="Zhang Y."/>
        </authorList>
    </citation>
    <scope>INTERACTION WITH TGB1</scope>
    <scope>FUNCTION</scope>
    <scope>SUBCELLULAR LOCATION</scope>
</reference>
<reference key="9">
    <citation type="journal article" date="2021" name="Plant Physiol.">
        <title>The serine/threonine/tyrosine kinase STY46 defends against hordeivirus infection by phosphorylating gammab protein.</title>
        <authorList>
            <person name="Zhang X."/>
            <person name="Wang X."/>
            <person name="Xu K."/>
            <person name="Jiang Z."/>
            <person name="Dong K."/>
            <person name="Xie X."/>
            <person name="Zhang H."/>
            <person name="Yue N."/>
            <person name="Zhang Y."/>
            <person name="Wang X.B."/>
            <person name="Han C."/>
            <person name="Yu J."/>
            <person name="Li D."/>
        </authorList>
    </citation>
    <scope>INTERACTION WITH HOST STY46</scope>
    <scope>PHOSPHORYLATION AT SERINES</scope>
</reference>
<protein>
    <recommendedName>
        <fullName>Suppressor of RNA silencing</fullName>
    </recommendedName>
    <alternativeName>
        <fullName>Gamma-B protein</fullName>
    </alternativeName>
    <alternativeName>
        <fullName evidence="9">Gammab protein</fullName>
    </alternativeName>
</protein>
<comment type="function">
    <text evidence="2 4 6 7">Suppressor of RNA-mediated gene silencing, also known as post-transcriptional gene silencing (PTGS), a mechanism of plant viral defense that limits the accumulation of viral RNAs (PubMed:12438624). Promotes viral cell-to-cell long distance movement by enhancing the ATPase activity of TGB1 (PubMed:12438624, PubMed:32730331). Enhances RNA helicase activity of replication protein alpha-A (PubMed:28388677). Suppresses autophagy induced by the host as a defense mechanism against viral infection (PubMed:29848767).</text>
</comment>
<comment type="subunit">
    <text evidence="4 5 6 7 8">Homooligomer (PubMed:29453938). Interacts (via C-terminus) with replication protein alpha-A (PubMed:28388677). Interacts (via N-terminus) with the movement protein TGB1; this interaction targets gammab-TGB1 at the periphery of chloroplasts and plasmodesmata (PubMed:32730331). Interacts with host autophagy protein ATG7; this interaction disrupts the host ATG7-ATG8 interaction to promote viral infection (PubMed:29848767). Interacts (via BM region) with host STY46; this interaction inhibits the viral infection (PubMed:33576790).</text>
</comment>
<comment type="subcellular location">
    <subcellularLocation>
        <location evidence="4">Host chloroplast envelope</location>
    </subcellularLocation>
    <subcellularLocation>
        <location evidence="7">Host endoplasmic reticulum</location>
    </subcellularLocation>
    <subcellularLocation>
        <location evidence="7">Host cell junction</location>
        <location evidence="7">Host plasmodesma</location>
    </subcellularLocation>
    <text evidence="4">Recruited by the replication protein alpha-A to viral replication sites at the host chloroplast membrane.</text>
</comment>
<comment type="domain">
    <text evidence="3">The three domains C1, BM and C2 are involved in zinc-binding. Zinc-binding of each of the motifs is critical for the biological activity.</text>
</comment>
<comment type="domain">
    <text evidence="5">The coiled coil domain is probably involved in homooligomerization.</text>
</comment>
<comment type="PTM">
    <text evidence="5">Phosphorylated at Ser-96 by a host PKA-like kinase; the phosphorylation at this site seems to suppress host cell death.</text>
</comment>
<comment type="PTM">
    <text evidence="8">Serine-phosphorylated by host STY46 kinase.</text>
</comment>
<comment type="miscellaneous">
    <text evidence="10">The genome of this virus consists of three linear, positive, single-stranded RNAs encapsidated in separate virions designated RNA-alpha, RNA-beta and RNA-gamma. Three proteins (alpha-A, beta-A and gamma-A) are translated directly from these genomic RNAs and the remaining proteins encoded on RNA-beta (beta-B, beta-C and beta-D) and RNA-gamma (gamma-B) are expressed via three subgenomic messenger RNAs.</text>
</comment>
<comment type="similarity">
    <text evidence="10">Belongs to the virgaviridae suppressor of RNA silencing family.</text>
</comment>
<accession>Q80874</accession>
<accession>Q07118</accession>